<accession>P37056</accession>
<feature type="signal peptide" evidence="2">
    <location>
        <begin position="1"/>
        <end position="20"/>
    </location>
</feature>
<feature type="chain" id="PRO_0000019766" description="Probable lipoprotein peptidase YaeF">
    <location>
        <begin position="21"/>
        <end position="274"/>
    </location>
</feature>
<feature type="active site" description="Nucleophile" evidence="1">
    <location>
        <position position="207"/>
    </location>
</feature>
<feature type="active site" description="Proton acceptor" evidence="1">
    <location>
        <position position="257"/>
    </location>
</feature>
<feature type="lipid moiety-binding region" description="N-palmitoyl cysteine" evidence="2">
    <location>
        <position position="21"/>
    </location>
</feature>
<feature type="lipid moiety-binding region" description="S-diacylglycerol cysteine" evidence="2">
    <location>
        <position position="21"/>
    </location>
</feature>
<comment type="subcellular location">
    <subcellularLocation>
        <location evidence="2">Cell inner membrane</location>
        <topology evidence="2">Lipid-anchor</topology>
    </subcellularLocation>
</comment>
<comment type="sequence caution" evidence="3">
    <conflict type="erroneous initiation">
        <sequence resource="EMBL-CDS" id="AAA82973"/>
    </conflict>
    <text>Extended N-terminus.</text>
</comment>
<comment type="sequence caution" evidence="3">
    <conflict type="erroneous initiation">
        <sequence resource="EMBL-CDS" id="AAB08621"/>
    </conflict>
    <text>Extended N-terminus.</text>
</comment>
<comment type="sequence caution" evidence="3">
    <conflict type="erroneous initiation">
        <sequence resource="EMBL-CDS" id="BAA08434"/>
    </conflict>
    <text>Extended N-terminus.</text>
</comment>
<dbReference type="EC" id="3.4.-.-"/>
<dbReference type="EMBL" id="L38619">
    <property type="protein sequence ID" value="AAA82973.1"/>
    <property type="status" value="ALT_INIT"/>
    <property type="molecule type" value="Genomic_DNA"/>
</dbReference>
<dbReference type="EMBL" id="D49445">
    <property type="protein sequence ID" value="BAA08434.1"/>
    <property type="status" value="ALT_INIT"/>
    <property type="molecule type" value="Genomic_DNA"/>
</dbReference>
<dbReference type="EMBL" id="U70214">
    <property type="protein sequence ID" value="AAB08621.1"/>
    <property type="status" value="ALT_INIT"/>
    <property type="molecule type" value="Genomic_DNA"/>
</dbReference>
<dbReference type="EMBL" id="U00096">
    <property type="protein sequence ID" value="AAC73304.2"/>
    <property type="molecule type" value="Genomic_DNA"/>
</dbReference>
<dbReference type="EMBL" id="AP009048">
    <property type="protein sequence ID" value="BAA77869.2"/>
    <property type="molecule type" value="Genomic_DNA"/>
</dbReference>
<dbReference type="EMBL" id="M97858">
    <property type="status" value="NOT_ANNOTATED_CDS"/>
    <property type="molecule type" value="Genomic_DNA"/>
</dbReference>
<dbReference type="EMBL" id="M32357">
    <property type="status" value="NOT_ANNOTATED_CDS"/>
    <property type="molecule type" value="Genomic_DNA"/>
</dbReference>
<dbReference type="EMBL" id="U18345">
    <property type="protein sequence ID" value="AAA86094.1"/>
    <property type="molecule type" value="Genomic_DNA"/>
</dbReference>
<dbReference type="PIR" id="A64744">
    <property type="entry name" value="A64744"/>
</dbReference>
<dbReference type="RefSeq" id="NP_414735.4">
    <property type="nucleotide sequence ID" value="NC_000913.3"/>
</dbReference>
<dbReference type="RefSeq" id="WP_001336393.1">
    <property type="nucleotide sequence ID" value="NZ_SSZK01000004.1"/>
</dbReference>
<dbReference type="SMR" id="P37056"/>
<dbReference type="BioGRID" id="4261951">
    <property type="interactions" value="306"/>
</dbReference>
<dbReference type="FunCoup" id="P37056">
    <property type="interactions" value="2"/>
</dbReference>
<dbReference type="STRING" id="511145.b0193"/>
<dbReference type="PaxDb" id="511145-b0193"/>
<dbReference type="EnsemblBacteria" id="AAC73304">
    <property type="protein sequence ID" value="AAC73304"/>
    <property type="gene ID" value="b0193"/>
</dbReference>
<dbReference type="GeneID" id="944892"/>
<dbReference type="KEGG" id="ecj:JW5016"/>
<dbReference type="KEGG" id="eco:b0193"/>
<dbReference type="KEGG" id="ecoc:C3026_00895"/>
<dbReference type="PATRIC" id="fig|1411691.4.peg.2085"/>
<dbReference type="EchoBASE" id="EB2059"/>
<dbReference type="eggNOG" id="COG0791">
    <property type="taxonomic scope" value="Bacteria"/>
</dbReference>
<dbReference type="HOGENOM" id="CLU_093835_0_0_6"/>
<dbReference type="InParanoid" id="P37056"/>
<dbReference type="OMA" id="AWFCSEF"/>
<dbReference type="OrthoDB" id="6534631at2"/>
<dbReference type="BioCyc" id="EcoCyc:EG12138-MONOMER"/>
<dbReference type="PRO" id="PR:P37056"/>
<dbReference type="Proteomes" id="UP000000625">
    <property type="component" value="Chromosome"/>
</dbReference>
<dbReference type="GO" id="GO:0005886">
    <property type="term" value="C:plasma membrane"/>
    <property type="evidence" value="ECO:0007669"/>
    <property type="project" value="UniProtKB-SubCell"/>
</dbReference>
<dbReference type="GO" id="GO:0008234">
    <property type="term" value="F:cysteine-type peptidase activity"/>
    <property type="evidence" value="ECO:0007669"/>
    <property type="project" value="UniProtKB-KW"/>
</dbReference>
<dbReference type="GO" id="GO:0006508">
    <property type="term" value="P:proteolysis"/>
    <property type="evidence" value="ECO:0007669"/>
    <property type="project" value="UniProtKB-KW"/>
</dbReference>
<dbReference type="Gene3D" id="3.90.1720.10">
    <property type="entry name" value="endopeptidase domain like (from Nostoc punctiforme)"/>
    <property type="match status" value="1"/>
</dbReference>
<dbReference type="InterPro" id="IPR038765">
    <property type="entry name" value="Papain-like_cys_pep_sf"/>
</dbReference>
<dbReference type="InterPro" id="IPR024453">
    <property type="entry name" value="Peptidase_C92"/>
</dbReference>
<dbReference type="NCBIfam" id="NF008552">
    <property type="entry name" value="PRK11479.1"/>
    <property type="match status" value="1"/>
</dbReference>
<dbReference type="Pfam" id="PF05708">
    <property type="entry name" value="Peptidase_C92"/>
    <property type="match status" value="1"/>
</dbReference>
<dbReference type="SUPFAM" id="SSF54001">
    <property type="entry name" value="Cysteine proteinases"/>
    <property type="match status" value="1"/>
</dbReference>
<dbReference type="PROSITE" id="PS51257">
    <property type="entry name" value="PROKAR_LIPOPROTEIN"/>
    <property type="match status" value="1"/>
</dbReference>
<proteinExistence type="inferred from homology"/>
<protein>
    <recommendedName>
        <fullName>Probable lipoprotein peptidase YaeF</fullName>
        <ecNumber>3.4.-.-</ecNumber>
    </recommendedName>
    <alternativeName>
        <fullName>Uncharacterized lipoprotein YaeF</fullName>
    </alternativeName>
</protein>
<organism>
    <name type="scientific">Escherichia coli (strain K12)</name>
    <dbReference type="NCBI Taxonomy" id="83333"/>
    <lineage>
        <taxon>Bacteria</taxon>
        <taxon>Pseudomonadati</taxon>
        <taxon>Pseudomonadota</taxon>
        <taxon>Gammaproteobacteria</taxon>
        <taxon>Enterobacterales</taxon>
        <taxon>Enterobacteriaceae</taxon>
        <taxon>Escherichia</taxon>
    </lineage>
</organism>
<name>YAEF_ECOLI</name>
<evidence type="ECO:0000250" key="1"/>
<evidence type="ECO:0000255" key="2">
    <source>
        <dbReference type="PROSITE-ProRule" id="PRU00303"/>
    </source>
</evidence>
<evidence type="ECO:0000305" key="3"/>
<gene>
    <name type="primary">yaeF</name>
    <name type="synonym">yaeK</name>
    <name type="ordered locus">b0193</name>
    <name type="ordered locus">JW5016</name>
</gene>
<sequence length="274" mass="29912">MDKPKAYCRLFLPSFLLLSACTVDISQPDPSATAVDAEAKTWAVKFQHQSSFTEQSIKEITAPDLKPGDLLFSSSLGVTSFGIRVFSTSSVSHVAIFLGDNNVAEATGAGVQIVSLKKAMKHSDKLFVLRVPDLTPQQATDITAFANKIKDSGYNYRGIVEFIPFMVTRQMCSLNPFSEDFRQQCVSGLAKAQLSSVGEGDKKSWFCSEFVTDAFAKAGHPLTLAQSGWISPADLMHMRIGDVSAFKPETQLQYVGHLKPGIYIKAGRFVGLTR</sequence>
<reference key="1">
    <citation type="journal article" date="1995" name="J. Bacteriol.">
        <title>Identification of cutC and cutF (nlpE) genes involved in copper tolerance in Escherichia coli.</title>
        <authorList>
            <person name="Gupta S.D."/>
            <person name="Lee B.T.O."/>
            <person name="Camakaris J."/>
            <person name="Wu H.C."/>
        </authorList>
    </citation>
    <scope>NUCLEOTIDE SEQUENCE [GENOMIC DNA]</scope>
    <source>
        <strain>K12 / MC4100 / ATCC 35695 / DSM 6574</strain>
    </source>
</reference>
<reference key="2">
    <citation type="submission" date="1995-12" db="EMBL/GenBank/DDBJ databases">
        <authorList>
            <person name="Yamamoto Y."/>
        </authorList>
    </citation>
    <scope>NUCLEOTIDE SEQUENCE [GENOMIC DNA]</scope>
    <source>
        <strain>K12 / W3110 / ATCC 27325 / DSM 5911</strain>
    </source>
</reference>
<reference key="3">
    <citation type="submission" date="1996-02" db="EMBL/GenBank/DDBJ databases">
        <title>Systematic sequencing of the Escherichia coli genome: analysis of the 4.0 - 6.0 min (189,987 - 281,416bp) region.</title>
        <authorList>
            <person name="Takemoto K."/>
            <person name="Mori H."/>
            <person name="Murayama N."/>
            <person name="Kataoka K."/>
            <person name="Yano M."/>
            <person name="Itoh T."/>
            <person name="Yamamoto Y."/>
            <person name="Inokuchi H."/>
            <person name="Miki T."/>
            <person name="Hatada E."/>
            <person name="Fukuda R."/>
            <person name="Ichihara S."/>
            <person name="Mizuno T."/>
            <person name="Makino K."/>
            <person name="Nakata A."/>
            <person name="Yura T."/>
            <person name="Sampei G."/>
            <person name="Mizobuchi K."/>
        </authorList>
    </citation>
    <scope>NUCLEOTIDE SEQUENCE [LARGE SCALE GENOMIC DNA]</scope>
    <source>
        <strain>K12 / W3110 / ATCC 27325 / DSM 5911</strain>
    </source>
</reference>
<reference key="4">
    <citation type="submission" date="1997-01" db="EMBL/GenBank/DDBJ databases">
        <title>Sequence of minutes 4-25 of Escherichia coli.</title>
        <authorList>
            <person name="Chung E."/>
            <person name="Allen E."/>
            <person name="Araujo R."/>
            <person name="Aparicio A.M."/>
            <person name="Davis K."/>
            <person name="Duncan M."/>
            <person name="Federspiel N."/>
            <person name="Hyman R."/>
            <person name="Kalman S."/>
            <person name="Komp C."/>
            <person name="Kurdi O."/>
            <person name="Lew H."/>
            <person name="Lin D."/>
            <person name="Namath A."/>
            <person name="Oefner P."/>
            <person name="Roberts D."/>
            <person name="Schramm S."/>
            <person name="Davis R.W."/>
        </authorList>
    </citation>
    <scope>NUCLEOTIDE SEQUENCE [LARGE SCALE GENOMIC DNA]</scope>
    <source>
        <strain>K12 / MG1655 / ATCC 47076</strain>
    </source>
</reference>
<reference key="5">
    <citation type="journal article" date="1997" name="Science">
        <title>The complete genome sequence of Escherichia coli K-12.</title>
        <authorList>
            <person name="Blattner F.R."/>
            <person name="Plunkett G. III"/>
            <person name="Bloch C.A."/>
            <person name="Perna N.T."/>
            <person name="Burland V."/>
            <person name="Riley M."/>
            <person name="Collado-Vides J."/>
            <person name="Glasner J.D."/>
            <person name="Rode C.K."/>
            <person name="Mayhew G.F."/>
            <person name="Gregor J."/>
            <person name="Davis N.W."/>
            <person name="Kirkpatrick H.A."/>
            <person name="Goeden M.A."/>
            <person name="Rose D.J."/>
            <person name="Mau B."/>
            <person name="Shao Y."/>
        </authorList>
    </citation>
    <scope>NUCLEOTIDE SEQUENCE [LARGE SCALE GENOMIC DNA]</scope>
    <source>
        <strain>K12 / MG1655 / ATCC 47076</strain>
    </source>
</reference>
<reference key="6">
    <citation type="journal article" date="2006" name="Mol. Syst. Biol.">
        <title>Highly accurate genome sequences of Escherichia coli K-12 strains MG1655 and W3110.</title>
        <authorList>
            <person name="Hayashi K."/>
            <person name="Morooka N."/>
            <person name="Yamamoto Y."/>
            <person name="Fujita K."/>
            <person name="Isono K."/>
            <person name="Choi S."/>
            <person name="Ohtsubo E."/>
            <person name="Baba T."/>
            <person name="Wanner B.L."/>
            <person name="Mori H."/>
            <person name="Horiuchi T."/>
        </authorList>
    </citation>
    <scope>NUCLEOTIDE SEQUENCE [LARGE SCALE GENOMIC DNA]</scope>
    <source>
        <strain>K12 / W3110 / ATCC 27325 / DSM 5911</strain>
    </source>
</reference>
<reference key="7">
    <citation type="journal article" date="1990" name="Nature">
        <title>Partition of tRNA synthetases into two classes based on mutually exclusive sets of sequence motifs.</title>
        <authorList>
            <person name="Eriani G."/>
            <person name="Delarue M."/>
            <person name="Poch O."/>
            <person name="Gangloff J."/>
            <person name="Moras D."/>
        </authorList>
    </citation>
    <scope>NUCLEOTIDE SEQUENCE [GENOMIC DNA] OF 1-144</scope>
</reference>
<reference key="8">
    <citation type="journal article" date="1990" name="J. Bacteriol.">
        <title>Identification and sequence of the drpA gene from Escherichia coli.</title>
        <authorList>
            <person name="Zhou Z."/>
            <person name="Syvanen M."/>
        </authorList>
    </citation>
    <scope>NUCLEOTIDE SEQUENCE [GENOMIC DNA] OF 1-126</scope>
</reference>
<reference key="9">
    <citation type="journal article" date="1995" name="J. Bacteriol.">
        <title>Overproduction of NlpE, a new outer membrane lipoprotein, suppresses the toxicity of periplasmic LacZ by activation of the Cpx signal transduction pathway.</title>
        <authorList>
            <person name="Snyder W.B."/>
            <person name="Davis L.J."/>
            <person name="Danese P.N."/>
            <person name="Cosma C.L."/>
            <person name="Silhavy T.J."/>
        </authorList>
    </citation>
    <scope>NUCLEOTIDE SEQUENCE [GENOMIC DNA] OF 114-274</scope>
    <source>
        <strain>K12 / MC4100 / ATCC 35695 / DSM 6574</strain>
    </source>
</reference>
<keyword id="KW-0997">Cell inner membrane</keyword>
<keyword id="KW-1003">Cell membrane</keyword>
<keyword id="KW-0378">Hydrolase</keyword>
<keyword id="KW-0449">Lipoprotein</keyword>
<keyword id="KW-0472">Membrane</keyword>
<keyword id="KW-0564">Palmitate</keyword>
<keyword id="KW-0645">Protease</keyword>
<keyword id="KW-1185">Reference proteome</keyword>
<keyword id="KW-0732">Signal</keyword>
<keyword id="KW-0788">Thiol protease</keyword>